<dbReference type="EMBL" id="AK293085">
    <property type="protein sequence ID" value="BAF85774.1"/>
    <property type="molecule type" value="mRNA"/>
</dbReference>
<dbReference type="EMBL" id="BX647664">
    <property type="protein sequence ID" value="CAI46059.1"/>
    <property type="molecule type" value="mRNA"/>
</dbReference>
<dbReference type="EMBL" id="BX647593">
    <property type="protein sequence ID" value="CAI46064.1"/>
    <property type="molecule type" value="mRNA"/>
</dbReference>
<dbReference type="EMBL" id="BX647559">
    <property type="protein sequence ID" value="CAI46095.1"/>
    <property type="molecule type" value="mRNA"/>
</dbReference>
<dbReference type="EMBL" id="CH471052">
    <property type="protein sequence ID" value="EAW79521.1"/>
    <property type="molecule type" value="Genomic_DNA"/>
</dbReference>
<dbReference type="EMBL" id="BC020832">
    <property type="protein sequence ID" value="AAH20832.1"/>
    <property type="molecule type" value="mRNA"/>
</dbReference>
<dbReference type="CCDS" id="CCDS3001.1"/>
<dbReference type="RefSeq" id="NP_776186.2">
    <property type="nucleotide sequence ID" value="NM_173825.5"/>
</dbReference>
<dbReference type="SMR" id="Q5HYI8"/>
<dbReference type="BioGRID" id="130066">
    <property type="interactions" value="226"/>
</dbReference>
<dbReference type="FunCoup" id="Q5HYI8">
    <property type="interactions" value="2126"/>
</dbReference>
<dbReference type="IntAct" id="Q5HYI8">
    <property type="interactions" value="86"/>
</dbReference>
<dbReference type="MINT" id="Q5HYI8"/>
<dbReference type="STRING" id="9606.ENSP00000273375"/>
<dbReference type="ChEMBL" id="CHEMBL4105853"/>
<dbReference type="DrugCentral" id="Q5HYI8"/>
<dbReference type="iPTMnet" id="Q5HYI8"/>
<dbReference type="PhosphoSitePlus" id="Q5HYI8"/>
<dbReference type="SwissPalm" id="Q5HYI8"/>
<dbReference type="BioMuta" id="RABL3"/>
<dbReference type="DMDM" id="74762186"/>
<dbReference type="jPOST" id="Q5HYI8"/>
<dbReference type="MassIVE" id="Q5HYI8"/>
<dbReference type="PaxDb" id="9606-ENSP00000273375"/>
<dbReference type="PeptideAtlas" id="Q5HYI8"/>
<dbReference type="ProteomicsDB" id="62938"/>
<dbReference type="Pumba" id="Q5HYI8"/>
<dbReference type="TopDownProteomics" id="Q5HYI8"/>
<dbReference type="Antibodypedia" id="32810">
    <property type="antibodies" value="46 antibodies from 20 providers"/>
</dbReference>
<dbReference type="DNASU" id="285282"/>
<dbReference type="Ensembl" id="ENST00000273375.8">
    <property type="protein sequence ID" value="ENSP00000273375.4"/>
    <property type="gene ID" value="ENSG00000144840.10"/>
</dbReference>
<dbReference type="GeneID" id="285282"/>
<dbReference type="KEGG" id="hsa:285282"/>
<dbReference type="MANE-Select" id="ENST00000273375.8">
    <property type="protein sequence ID" value="ENSP00000273375.4"/>
    <property type="RefSeq nucleotide sequence ID" value="NM_173825.5"/>
    <property type="RefSeq protein sequence ID" value="NP_776186.2"/>
</dbReference>
<dbReference type="UCSC" id="uc003edx.3">
    <property type="organism name" value="human"/>
</dbReference>
<dbReference type="AGR" id="HGNC:18072"/>
<dbReference type="CTD" id="285282"/>
<dbReference type="DisGeNET" id="285282"/>
<dbReference type="GeneCards" id="RABL3"/>
<dbReference type="HGNC" id="HGNC:18072">
    <property type="gene designation" value="RABL3"/>
</dbReference>
<dbReference type="HPA" id="ENSG00000144840">
    <property type="expression patterns" value="Low tissue specificity"/>
</dbReference>
<dbReference type="MalaCards" id="RABL3"/>
<dbReference type="MIM" id="618542">
    <property type="type" value="gene"/>
</dbReference>
<dbReference type="MIM" id="618680">
    <property type="type" value="phenotype"/>
</dbReference>
<dbReference type="neXtProt" id="NX_Q5HYI8"/>
<dbReference type="OpenTargets" id="ENSG00000144840"/>
<dbReference type="Orphanet" id="1333">
    <property type="disease" value="Familial pancreatic carcinoma"/>
</dbReference>
<dbReference type="PharmGKB" id="PA34161"/>
<dbReference type="VEuPathDB" id="HostDB:ENSG00000144840"/>
<dbReference type="eggNOG" id="ENOG502QT3S">
    <property type="taxonomic scope" value="Eukaryota"/>
</dbReference>
<dbReference type="GeneTree" id="ENSGT00390000007467"/>
<dbReference type="HOGENOM" id="CLU_084875_1_0_1"/>
<dbReference type="InParanoid" id="Q5HYI8"/>
<dbReference type="OMA" id="HIRFDME"/>
<dbReference type="OrthoDB" id="5914890at2759"/>
<dbReference type="PAN-GO" id="Q5HYI8">
    <property type="GO annotations" value="3 GO annotations based on evolutionary models"/>
</dbReference>
<dbReference type="PhylomeDB" id="Q5HYI8"/>
<dbReference type="TreeFam" id="TF320841"/>
<dbReference type="PathwayCommons" id="Q5HYI8"/>
<dbReference type="SignaLink" id="Q5HYI8"/>
<dbReference type="BioGRID-ORCS" id="285282">
    <property type="hits" value="34 hits in 1157 CRISPR screens"/>
</dbReference>
<dbReference type="GenomeRNAi" id="285282"/>
<dbReference type="Pharos" id="Q5HYI8">
    <property type="development level" value="Tbio"/>
</dbReference>
<dbReference type="PRO" id="PR:Q5HYI8"/>
<dbReference type="Proteomes" id="UP000005640">
    <property type="component" value="Chromosome 3"/>
</dbReference>
<dbReference type="RNAct" id="Q5HYI8">
    <property type="molecule type" value="protein"/>
</dbReference>
<dbReference type="Bgee" id="ENSG00000144840">
    <property type="expression patterns" value="Expressed in adrenal tissue and 198 other cell types or tissues"/>
</dbReference>
<dbReference type="ExpressionAtlas" id="Q5HYI8">
    <property type="expression patterns" value="baseline and differential"/>
</dbReference>
<dbReference type="GO" id="GO:0012505">
    <property type="term" value="C:endomembrane system"/>
    <property type="evidence" value="ECO:0000318"/>
    <property type="project" value="GO_Central"/>
</dbReference>
<dbReference type="GO" id="GO:0005525">
    <property type="term" value="F:GTP binding"/>
    <property type="evidence" value="ECO:0000250"/>
    <property type="project" value="UniProtKB"/>
</dbReference>
<dbReference type="GO" id="GO:0003924">
    <property type="term" value="F:GTPase activity"/>
    <property type="evidence" value="ECO:0000318"/>
    <property type="project" value="GO_Central"/>
</dbReference>
<dbReference type="GO" id="GO:0042803">
    <property type="term" value="F:protein homodimerization activity"/>
    <property type="evidence" value="ECO:0000250"/>
    <property type="project" value="UniProtKB"/>
</dbReference>
<dbReference type="GO" id="GO:0030183">
    <property type="term" value="P:B cell differentiation"/>
    <property type="evidence" value="ECO:0000250"/>
    <property type="project" value="UniProtKB"/>
</dbReference>
<dbReference type="GO" id="GO:0006886">
    <property type="term" value="P:intracellular protein transport"/>
    <property type="evidence" value="ECO:0000318"/>
    <property type="project" value="GO_Central"/>
</dbReference>
<dbReference type="GO" id="GO:0001779">
    <property type="term" value="P:natural killer cell differentiation"/>
    <property type="evidence" value="ECO:0000250"/>
    <property type="project" value="UniProtKB"/>
</dbReference>
<dbReference type="GO" id="GO:0050821">
    <property type="term" value="P:protein stabilization"/>
    <property type="evidence" value="ECO:0000250"/>
    <property type="project" value="UniProtKB"/>
</dbReference>
<dbReference type="GO" id="GO:1903059">
    <property type="term" value="P:regulation of protein lipidation"/>
    <property type="evidence" value="ECO:0000315"/>
    <property type="project" value="UniProtKB"/>
</dbReference>
<dbReference type="GO" id="GO:0046578">
    <property type="term" value="P:regulation of Ras protein signal transduction"/>
    <property type="evidence" value="ECO:0000315"/>
    <property type="project" value="UniProtKB"/>
</dbReference>
<dbReference type="GO" id="GO:0033077">
    <property type="term" value="P:T cell differentiation in thymus"/>
    <property type="evidence" value="ECO:0000250"/>
    <property type="project" value="UniProtKB"/>
</dbReference>
<dbReference type="CDD" id="cd04102">
    <property type="entry name" value="RabL3"/>
    <property type="match status" value="1"/>
</dbReference>
<dbReference type="FunFam" id="3.40.50.300:FF:000525">
    <property type="entry name" value="rab-like protein 3 isoform X1"/>
    <property type="match status" value="1"/>
</dbReference>
<dbReference type="Gene3D" id="3.40.50.300">
    <property type="entry name" value="P-loop containing nucleotide triphosphate hydrolases"/>
    <property type="match status" value="1"/>
</dbReference>
<dbReference type="InterPro" id="IPR027417">
    <property type="entry name" value="P-loop_NTPase"/>
</dbReference>
<dbReference type="PANTHER" id="PTHR24073">
    <property type="entry name" value="DRAB5-RELATED"/>
    <property type="match status" value="1"/>
</dbReference>
<dbReference type="Pfam" id="PF08477">
    <property type="entry name" value="Roc"/>
    <property type="match status" value="1"/>
</dbReference>
<dbReference type="PRINTS" id="PR00449">
    <property type="entry name" value="RASTRNSFRMNG"/>
</dbReference>
<dbReference type="SMART" id="SM00175">
    <property type="entry name" value="RAB"/>
    <property type="match status" value="1"/>
</dbReference>
<dbReference type="SUPFAM" id="SSF52540">
    <property type="entry name" value="P-loop containing nucleoside triphosphate hydrolases"/>
    <property type="match status" value="1"/>
</dbReference>
<dbReference type="PROSITE" id="PS51419">
    <property type="entry name" value="RAB"/>
    <property type="match status" value="1"/>
</dbReference>
<accession>Q5HYI8</accession>
<accession>Q8WUD3</accession>
<comment type="function">
    <text evidence="1 2">Required for KRAS signaling regulation and modulation of cell proliferation (PubMed:31406347). Regulator of KRAS prenylation, and probably prenylation of other small GTPases (PubMed:31406347). Required for lymphocyte development and function (By similarity). Not required for myeloid cell development (By similarity).</text>
</comment>
<comment type="subunit">
    <text evidence="1 2">Homodimer (By similarity). Interacts with GPR89; the interaction stabilizes GPR89 (By similarity). Interacts with RAP1GDS1 (PubMed:31406347).</text>
</comment>
<comment type="disease" evidence="2">
    <disease id="DI-05686">
        <name>Pancreatic cancer 5</name>
        <acronym>PNCA5</acronym>
        <description>A malignant neoplasm of the pancreas. Tumors can arise from both the exocrine and endocrine portions of the pancreas, but 95% of them develop from the exocrine portion, including the ductal epithelium, acinar cells, connective tissue, and lymphatic tissue.</description>
        <dbReference type="MIM" id="618680"/>
    </disease>
    <text evidence="2">Disease susceptibility is associated with variants affecting the gene represented in this entry. RABL3 variants have been found in families with a history of pancreatic ductal adenocarcinoma and multiple other occurrences of cancer, including melanoma, breast cancer, prostate cancer, and colon cancer.</text>
</comment>
<comment type="similarity">
    <text evidence="3">Belongs to the small GTPase superfamily. Rab family.</text>
</comment>
<feature type="chain" id="PRO_0000312166" description="Rab-like protein 3">
    <location>
        <begin position="1"/>
        <end position="236"/>
    </location>
</feature>
<feature type="region of interest" description="Small GTPase-like">
    <location>
        <begin position="1"/>
        <end position="236"/>
    </location>
</feature>
<feature type="binding site" evidence="1">
    <location>
        <begin position="16"/>
        <end position="21"/>
    </location>
    <ligand>
        <name>GTP</name>
        <dbReference type="ChEBI" id="CHEBI:37565"/>
    </ligand>
</feature>
<feature type="binding site" evidence="1">
    <location>
        <begin position="148"/>
        <end position="150"/>
    </location>
    <ligand>
        <name>GTP</name>
        <dbReference type="ChEBI" id="CHEBI:37565"/>
    </ligand>
</feature>
<feature type="binding site" evidence="1">
    <location>
        <begin position="179"/>
        <end position="180"/>
    </location>
    <ligand>
        <name>GTP</name>
        <dbReference type="ChEBI" id="CHEBI:37565"/>
    </ligand>
</feature>
<feature type="sequence variant" id="VAR_083453" description="In PNCA5; associated with disease susceptibility; increased KRAS signaling and cell proliferation; increased interaction with RAP1GDS1; increased KRAS prenylation." evidence="2">
    <location>
        <begin position="36"/>
        <end position="236"/>
    </location>
</feature>
<feature type="sequence variant" id="VAR_083454" description="In PNCA5; associated with disease susceptibility; dbSNP:rs61756477." evidence="2">
    <original>R</original>
    <variation>Q</variation>
    <location>
        <position position="184"/>
    </location>
</feature>
<feature type="sequence conflict" description="In Ref. 4; AAH20832." evidence="3" ref="4">
    <original>Y</original>
    <variation>C</variation>
    <location>
        <position position="60"/>
    </location>
</feature>
<feature type="sequence conflict" description="In Ref. 4; AAH20832." evidence="3" ref="4">
    <original>R</original>
    <variation>T</variation>
    <location>
        <position position="163"/>
    </location>
</feature>
<protein>
    <recommendedName>
        <fullName>Rab-like protein 3</fullName>
    </recommendedName>
</protein>
<evidence type="ECO:0000250" key="1">
    <source>
        <dbReference type="UniProtKB" id="Q9D4V7"/>
    </source>
</evidence>
<evidence type="ECO:0000269" key="2">
    <source>
    </source>
</evidence>
<evidence type="ECO:0000305" key="3"/>
<gene>
    <name type="primary">RABL3</name>
</gene>
<organism>
    <name type="scientific">Homo sapiens</name>
    <name type="common">Human</name>
    <dbReference type="NCBI Taxonomy" id="9606"/>
    <lineage>
        <taxon>Eukaryota</taxon>
        <taxon>Metazoa</taxon>
        <taxon>Chordata</taxon>
        <taxon>Craniata</taxon>
        <taxon>Vertebrata</taxon>
        <taxon>Euteleostomi</taxon>
        <taxon>Mammalia</taxon>
        <taxon>Eutheria</taxon>
        <taxon>Euarchontoglires</taxon>
        <taxon>Primates</taxon>
        <taxon>Haplorrhini</taxon>
        <taxon>Catarrhini</taxon>
        <taxon>Hominidae</taxon>
        <taxon>Homo</taxon>
    </lineage>
</organism>
<keyword id="KW-0225">Disease variant</keyword>
<keyword id="KW-0342">GTP-binding</keyword>
<keyword id="KW-0547">Nucleotide-binding</keyword>
<keyword id="KW-1267">Proteomics identification</keyword>
<keyword id="KW-1185">Reference proteome</keyword>
<sequence length="236" mass="26423">MASLDRVKVLVLGDSGVGKSSLVHLLCQNQVLGNPSWTVGCSVDVRVHDYKEGTPEEKTYYIELWDVGGSVGSASSVKSTRAVFYNSVNGIIFVHDLTNKKSSQNLRRWSLEALNRDLVPTGVLVTNGDYDQEQFADNQIPLLVIGTKLDQIHETKRHEVLTRTAFLAEDFNPEEINLDCTNPRYLAAGSSNAVKLSRFFDKVIEKRYFLREGNQIPGFPDRKRFGAGTLKSLHYD</sequence>
<name>RABL3_HUMAN</name>
<reference key="1">
    <citation type="journal article" date="2004" name="Nat. Genet.">
        <title>Complete sequencing and characterization of 21,243 full-length human cDNAs.</title>
        <authorList>
            <person name="Ota T."/>
            <person name="Suzuki Y."/>
            <person name="Nishikawa T."/>
            <person name="Otsuki T."/>
            <person name="Sugiyama T."/>
            <person name="Irie R."/>
            <person name="Wakamatsu A."/>
            <person name="Hayashi K."/>
            <person name="Sato H."/>
            <person name="Nagai K."/>
            <person name="Kimura K."/>
            <person name="Makita H."/>
            <person name="Sekine M."/>
            <person name="Obayashi M."/>
            <person name="Nishi T."/>
            <person name="Shibahara T."/>
            <person name="Tanaka T."/>
            <person name="Ishii S."/>
            <person name="Yamamoto J."/>
            <person name="Saito K."/>
            <person name="Kawai Y."/>
            <person name="Isono Y."/>
            <person name="Nakamura Y."/>
            <person name="Nagahari K."/>
            <person name="Murakami K."/>
            <person name="Yasuda T."/>
            <person name="Iwayanagi T."/>
            <person name="Wagatsuma M."/>
            <person name="Shiratori A."/>
            <person name="Sudo H."/>
            <person name="Hosoiri T."/>
            <person name="Kaku Y."/>
            <person name="Kodaira H."/>
            <person name="Kondo H."/>
            <person name="Sugawara M."/>
            <person name="Takahashi M."/>
            <person name="Kanda K."/>
            <person name="Yokoi T."/>
            <person name="Furuya T."/>
            <person name="Kikkawa E."/>
            <person name="Omura Y."/>
            <person name="Abe K."/>
            <person name="Kamihara K."/>
            <person name="Katsuta N."/>
            <person name="Sato K."/>
            <person name="Tanikawa M."/>
            <person name="Yamazaki M."/>
            <person name="Ninomiya K."/>
            <person name="Ishibashi T."/>
            <person name="Yamashita H."/>
            <person name="Murakawa K."/>
            <person name="Fujimori K."/>
            <person name="Tanai H."/>
            <person name="Kimata M."/>
            <person name="Watanabe M."/>
            <person name="Hiraoka S."/>
            <person name="Chiba Y."/>
            <person name="Ishida S."/>
            <person name="Ono Y."/>
            <person name="Takiguchi S."/>
            <person name="Watanabe S."/>
            <person name="Yosida M."/>
            <person name="Hotuta T."/>
            <person name="Kusano J."/>
            <person name="Kanehori K."/>
            <person name="Takahashi-Fujii A."/>
            <person name="Hara H."/>
            <person name="Tanase T.-O."/>
            <person name="Nomura Y."/>
            <person name="Togiya S."/>
            <person name="Komai F."/>
            <person name="Hara R."/>
            <person name="Takeuchi K."/>
            <person name="Arita M."/>
            <person name="Imose N."/>
            <person name="Musashino K."/>
            <person name="Yuuki H."/>
            <person name="Oshima A."/>
            <person name="Sasaki N."/>
            <person name="Aotsuka S."/>
            <person name="Yoshikawa Y."/>
            <person name="Matsunawa H."/>
            <person name="Ichihara T."/>
            <person name="Shiohata N."/>
            <person name="Sano S."/>
            <person name="Moriya S."/>
            <person name="Momiyama H."/>
            <person name="Satoh N."/>
            <person name="Takami S."/>
            <person name="Terashima Y."/>
            <person name="Suzuki O."/>
            <person name="Nakagawa S."/>
            <person name="Senoh A."/>
            <person name="Mizoguchi H."/>
            <person name="Goto Y."/>
            <person name="Shimizu F."/>
            <person name="Wakebe H."/>
            <person name="Hishigaki H."/>
            <person name="Watanabe T."/>
            <person name="Sugiyama A."/>
            <person name="Takemoto M."/>
            <person name="Kawakami B."/>
            <person name="Yamazaki M."/>
            <person name="Watanabe K."/>
            <person name="Kumagai A."/>
            <person name="Itakura S."/>
            <person name="Fukuzumi Y."/>
            <person name="Fujimori Y."/>
            <person name="Komiyama M."/>
            <person name="Tashiro H."/>
            <person name="Tanigami A."/>
            <person name="Fujiwara T."/>
            <person name="Ono T."/>
            <person name="Yamada K."/>
            <person name="Fujii Y."/>
            <person name="Ozaki K."/>
            <person name="Hirao M."/>
            <person name="Ohmori Y."/>
            <person name="Kawabata A."/>
            <person name="Hikiji T."/>
            <person name="Kobatake N."/>
            <person name="Inagaki H."/>
            <person name="Ikema Y."/>
            <person name="Okamoto S."/>
            <person name="Okitani R."/>
            <person name="Kawakami T."/>
            <person name="Noguchi S."/>
            <person name="Itoh T."/>
            <person name="Shigeta K."/>
            <person name="Senba T."/>
            <person name="Matsumura K."/>
            <person name="Nakajima Y."/>
            <person name="Mizuno T."/>
            <person name="Morinaga M."/>
            <person name="Sasaki M."/>
            <person name="Togashi T."/>
            <person name="Oyama M."/>
            <person name="Hata H."/>
            <person name="Watanabe M."/>
            <person name="Komatsu T."/>
            <person name="Mizushima-Sugano J."/>
            <person name="Satoh T."/>
            <person name="Shirai Y."/>
            <person name="Takahashi Y."/>
            <person name="Nakagawa K."/>
            <person name="Okumura K."/>
            <person name="Nagase T."/>
            <person name="Nomura N."/>
            <person name="Kikuchi H."/>
            <person name="Masuho Y."/>
            <person name="Yamashita R."/>
            <person name="Nakai K."/>
            <person name="Yada T."/>
            <person name="Nakamura Y."/>
            <person name="Ohara O."/>
            <person name="Isogai T."/>
            <person name="Sugano S."/>
        </authorList>
    </citation>
    <scope>NUCLEOTIDE SEQUENCE [LARGE SCALE MRNA]</scope>
</reference>
<reference key="2">
    <citation type="journal article" date="2007" name="BMC Genomics">
        <title>The full-ORF clone resource of the German cDNA consortium.</title>
        <authorList>
            <person name="Bechtel S."/>
            <person name="Rosenfelder H."/>
            <person name="Duda A."/>
            <person name="Schmidt C.P."/>
            <person name="Ernst U."/>
            <person name="Wellenreuther R."/>
            <person name="Mehrle A."/>
            <person name="Schuster C."/>
            <person name="Bahr A."/>
            <person name="Bloecker H."/>
            <person name="Heubner D."/>
            <person name="Hoerlein A."/>
            <person name="Michel G."/>
            <person name="Wedler H."/>
            <person name="Koehrer K."/>
            <person name="Ottenwaelder B."/>
            <person name="Poustka A."/>
            <person name="Wiemann S."/>
            <person name="Schupp I."/>
        </authorList>
    </citation>
    <scope>NUCLEOTIDE SEQUENCE [LARGE SCALE MRNA]</scope>
    <source>
        <tissue>Bone marrow</tissue>
        <tissue>Fetal skin</tissue>
        <tissue>Heart</tissue>
    </source>
</reference>
<reference key="3">
    <citation type="submission" date="2005-09" db="EMBL/GenBank/DDBJ databases">
        <authorList>
            <person name="Mural R.J."/>
            <person name="Istrail S."/>
            <person name="Sutton G.G."/>
            <person name="Florea L."/>
            <person name="Halpern A.L."/>
            <person name="Mobarry C.M."/>
            <person name="Lippert R."/>
            <person name="Walenz B."/>
            <person name="Shatkay H."/>
            <person name="Dew I."/>
            <person name="Miller J.R."/>
            <person name="Flanigan M.J."/>
            <person name="Edwards N.J."/>
            <person name="Bolanos R."/>
            <person name="Fasulo D."/>
            <person name="Halldorsson B.V."/>
            <person name="Hannenhalli S."/>
            <person name="Turner R."/>
            <person name="Yooseph S."/>
            <person name="Lu F."/>
            <person name="Nusskern D.R."/>
            <person name="Shue B.C."/>
            <person name="Zheng X.H."/>
            <person name="Zhong F."/>
            <person name="Delcher A.L."/>
            <person name="Huson D.H."/>
            <person name="Kravitz S.A."/>
            <person name="Mouchard L."/>
            <person name="Reinert K."/>
            <person name="Remington K.A."/>
            <person name="Clark A.G."/>
            <person name="Waterman M.S."/>
            <person name="Eichler E.E."/>
            <person name="Adams M.D."/>
            <person name="Hunkapiller M.W."/>
            <person name="Myers E.W."/>
            <person name="Venter J.C."/>
        </authorList>
    </citation>
    <scope>NUCLEOTIDE SEQUENCE [LARGE SCALE GENOMIC DNA]</scope>
</reference>
<reference key="4">
    <citation type="journal article" date="2004" name="Genome Res.">
        <title>The status, quality, and expansion of the NIH full-length cDNA project: the Mammalian Gene Collection (MGC).</title>
        <authorList>
            <consortium name="The MGC Project Team"/>
        </authorList>
    </citation>
    <scope>NUCLEOTIDE SEQUENCE [LARGE SCALE MRNA]</scope>
    <source>
        <tissue>Testis</tissue>
    </source>
</reference>
<reference key="5">
    <citation type="journal article" date="2011" name="BMC Syst. Biol.">
        <title>Initial characterization of the human central proteome.</title>
        <authorList>
            <person name="Burkard T.R."/>
            <person name="Planyavsky M."/>
            <person name="Kaupe I."/>
            <person name="Breitwieser F.P."/>
            <person name="Buerckstuemmer T."/>
            <person name="Bennett K.L."/>
            <person name="Superti-Furga G."/>
            <person name="Colinge J."/>
        </authorList>
    </citation>
    <scope>IDENTIFICATION BY MASS SPECTROMETRY [LARGE SCALE ANALYSIS]</scope>
</reference>
<reference key="6">
    <citation type="journal article" date="2014" name="J. Proteomics">
        <title>An enzyme assisted RP-RPLC approach for in-depth analysis of human liver phosphoproteome.</title>
        <authorList>
            <person name="Bian Y."/>
            <person name="Song C."/>
            <person name="Cheng K."/>
            <person name="Dong M."/>
            <person name="Wang F."/>
            <person name="Huang J."/>
            <person name="Sun D."/>
            <person name="Wang L."/>
            <person name="Ye M."/>
            <person name="Zou H."/>
        </authorList>
    </citation>
    <scope>IDENTIFICATION BY MASS SPECTROMETRY [LARGE SCALE ANALYSIS]</scope>
    <source>
        <tissue>Liver</tissue>
    </source>
</reference>
<reference key="7">
    <citation type="journal article" date="2015" name="Proteomics">
        <title>N-terminome analysis of the human mitochondrial proteome.</title>
        <authorList>
            <person name="Vaca Jacome A.S."/>
            <person name="Rabilloud T."/>
            <person name="Schaeffer-Reiss C."/>
            <person name="Rompais M."/>
            <person name="Ayoub D."/>
            <person name="Lane L."/>
            <person name="Bairoch A."/>
            <person name="Van Dorsselaer A."/>
            <person name="Carapito C."/>
        </authorList>
    </citation>
    <scope>IDENTIFICATION BY MASS SPECTROMETRY [LARGE SCALE ANALYSIS]</scope>
</reference>
<reference key="8">
    <citation type="journal article" date="2019" name="Nat. Genet.">
        <title>Mutations in RABL3 alter KRAS prenylation and are associated with hereditary pancreatic cancer.</title>
        <authorList>
            <person name="Nissim S."/>
            <person name="Leshchiner I."/>
            <person name="Mancias J.D."/>
            <person name="Greenblatt M.B."/>
            <person name="Maertens O."/>
            <person name="Cassa C.A."/>
            <person name="Rosenfeld J.A."/>
            <person name="Cox A.G."/>
            <person name="Hedgepeth J."/>
            <person name="Wucherpfennig J.I."/>
            <person name="Kim A.J."/>
            <person name="Henderson J.E."/>
            <person name="Gonyo P."/>
            <person name="Brandt A."/>
            <person name="Lorimer E."/>
            <person name="Unger B."/>
            <person name="Prokop J.W."/>
            <person name="Heidel J.R."/>
            <person name="Wang X.X."/>
            <person name="Ukaegbu C.I."/>
            <person name="Jennings B.C."/>
            <person name="Paulo J.A."/>
            <person name="Gableske S."/>
            <person name="Fierke C.A."/>
            <person name="Getz G."/>
            <person name="Sunyaev S.R."/>
            <person name="Wade Harper J."/>
            <person name="Cichowski K."/>
            <person name="Kimmelman A.C."/>
            <person name="Houvras Y."/>
            <person name="Syngal S."/>
            <person name="Williams C."/>
            <person name="Goessling W."/>
        </authorList>
    </citation>
    <scope>FUNCTION</scope>
    <scope>INTERACTION WITH RAP1GDS1</scope>
    <scope>INVOLVEMENT IN PNCA5</scope>
    <scope>VARIANTS PNCA5 36-SER--ASP-236 DEL AND GLN-184</scope>
    <scope>CHARACTERIZATION OF VARIANT PNCA5 36-SER--ASP-236 DEL</scope>
</reference>
<proteinExistence type="evidence at protein level"/>